<dbReference type="EMBL" id="Z28247">
    <property type="protein sequence ID" value="CAA82094.1"/>
    <property type="molecule type" value="Genomic_DNA"/>
</dbReference>
<dbReference type="EMBL" id="BK006944">
    <property type="protein sequence ID" value="DAA09177.1"/>
    <property type="molecule type" value="Genomic_DNA"/>
</dbReference>
<dbReference type="PIR" id="S38091">
    <property type="entry name" value="S38091"/>
</dbReference>
<dbReference type="RefSeq" id="NP_012947.1">
    <property type="nucleotide sequence ID" value="NM_001179812.1"/>
</dbReference>
<dbReference type="PDB" id="5Y88">
    <property type="method" value="EM"/>
    <property type="resolution" value="3.70 A"/>
    <property type="chains" value="V=1-322"/>
</dbReference>
<dbReference type="PDBsum" id="5Y88"/>
<dbReference type="EMDB" id="EMD-6817"/>
<dbReference type="SMR" id="P36118"/>
<dbReference type="BioGRID" id="34154">
    <property type="interactions" value="192"/>
</dbReference>
<dbReference type="ComplexPortal" id="CPX-1886">
    <property type="entry name" value="Post-mRNA release spliceosomal complex"/>
</dbReference>
<dbReference type="DIP" id="DIP-1924N"/>
<dbReference type="FunCoup" id="P36118">
    <property type="interactions" value="216"/>
</dbReference>
<dbReference type="IntAct" id="P36118">
    <property type="interactions" value="47"/>
</dbReference>
<dbReference type="MINT" id="P36118"/>
<dbReference type="STRING" id="4932.YKR022C"/>
<dbReference type="iPTMnet" id="P36118"/>
<dbReference type="PaxDb" id="4932-YKR022C"/>
<dbReference type="PeptideAtlas" id="P36118"/>
<dbReference type="EnsemblFungi" id="YKR022C_mRNA">
    <property type="protein sequence ID" value="YKR022C"/>
    <property type="gene ID" value="YKR022C"/>
</dbReference>
<dbReference type="GeneID" id="853892"/>
<dbReference type="KEGG" id="sce:YKR022C"/>
<dbReference type="AGR" id="SGD:S000001730"/>
<dbReference type="SGD" id="S000001730">
    <property type="gene designation" value="NTR2"/>
</dbReference>
<dbReference type="VEuPathDB" id="FungiDB:YKR022C"/>
<dbReference type="eggNOG" id="ENOG502SA8V">
    <property type="taxonomic scope" value="Eukaryota"/>
</dbReference>
<dbReference type="HOGENOM" id="CLU_074884_0_0_1"/>
<dbReference type="InParanoid" id="P36118"/>
<dbReference type="OMA" id="SSEWETH"/>
<dbReference type="OrthoDB" id="4067234at2759"/>
<dbReference type="BioCyc" id="YEAST:G3O-31998-MONOMER"/>
<dbReference type="BioGRID-ORCS" id="853892">
    <property type="hits" value="4 hits in 10 CRISPR screens"/>
</dbReference>
<dbReference type="PRO" id="PR:P36118"/>
<dbReference type="Proteomes" id="UP000002311">
    <property type="component" value="Chromosome XI"/>
</dbReference>
<dbReference type="RNAct" id="P36118">
    <property type="molecule type" value="protein"/>
</dbReference>
<dbReference type="GO" id="GO:0005737">
    <property type="term" value="C:cytoplasm"/>
    <property type="evidence" value="ECO:0007005"/>
    <property type="project" value="SGD"/>
</dbReference>
<dbReference type="GO" id="GO:0005783">
    <property type="term" value="C:endoplasmic reticulum"/>
    <property type="evidence" value="ECO:0007005"/>
    <property type="project" value="SGD"/>
</dbReference>
<dbReference type="GO" id="GO:0005634">
    <property type="term" value="C:nucleus"/>
    <property type="evidence" value="ECO:0007005"/>
    <property type="project" value="SGD"/>
</dbReference>
<dbReference type="GO" id="GO:0005681">
    <property type="term" value="C:spliceosomal complex"/>
    <property type="evidence" value="ECO:0000314"/>
    <property type="project" value="SGD"/>
</dbReference>
<dbReference type="GO" id="GO:0071008">
    <property type="term" value="C:U2-type post-mRNA release spliceosomal complex"/>
    <property type="evidence" value="ECO:0000314"/>
    <property type="project" value="SGD"/>
</dbReference>
<dbReference type="GO" id="GO:0000390">
    <property type="term" value="P:spliceosomal complex disassembly"/>
    <property type="evidence" value="ECO:0000314"/>
    <property type="project" value="SGD"/>
</dbReference>
<dbReference type="DisProt" id="DP01471"/>
<dbReference type="InterPro" id="IPR028211">
    <property type="entry name" value="Ntr2"/>
</dbReference>
<dbReference type="Pfam" id="PF15458">
    <property type="entry name" value="NTR2"/>
    <property type="match status" value="1"/>
</dbReference>
<accession>P36118</accession>
<accession>D6VX87</accession>
<evidence type="ECO:0000256" key="1">
    <source>
        <dbReference type="SAM" id="MobiDB-lite"/>
    </source>
</evidence>
<evidence type="ECO:0000269" key="2">
    <source>
    </source>
</evidence>
<evidence type="ECO:0000269" key="3">
    <source>
    </source>
</evidence>
<evidence type="ECO:0000269" key="4">
    <source>
    </source>
</evidence>
<evidence type="ECO:0000269" key="5">
    <source>
    </source>
</evidence>
<evidence type="ECO:0007744" key="6">
    <source>
    </source>
</evidence>
<evidence type="ECO:0007744" key="7">
    <source>
    </source>
</evidence>
<evidence type="ECO:0007829" key="8">
    <source>
        <dbReference type="PDB" id="5Y88"/>
    </source>
</evidence>
<organism>
    <name type="scientific">Saccharomyces cerevisiae (strain ATCC 204508 / S288c)</name>
    <name type="common">Baker's yeast</name>
    <dbReference type="NCBI Taxonomy" id="559292"/>
    <lineage>
        <taxon>Eukaryota</taxon>
        <taxon>Fungi</taxon>
        <taxon>Dikarya</taxon>
        <taxon>Ascomycota</taxon>
        <taxon>Saccharomycotina</taxon>
        <taxon>Saccharomycetes</taxon>
        <taxon>Saccharomycetales</taxon>
        <taxon>Saccharomycetaceae</taxon>
        <taxon>Saccharomyces</taxon>
    </lineage>
</organism>
<keyword id="KW-0002">3D-structure</keyword>
<keyword id="KW-0963">Cytoplasm</keyword>
<keyword id="KW-0507">mRNA processing</keyword>
<keyword id="KW-0508">mRNA splicing</keyword>
<keyword id="KW-0539">Nucleus</keyword>
<keyword id="KW-0597">Phosphoprotein</keyword>
<keyword id="KW-1185">Reference proteome</keyword>
<keyword id="KW-0747">Spliceosome</keyword>
<proteinExistence type="evidence at protein level"/>
<sequence>MAIKKRNKIRLPSGSPEEVGIDGSAHKPMQQIKPLVSNDSEDDDNDICVLQPIKFKKVPKRDITFDGEQAIKEDNSHYEDLYHSKKNTNASTRNKDDLLILNMEDLMEGNHHLLSDSSEAGSSSEGEHISSIPTRGEIAKLKAQKSLSRRKISESDVTTERDYVKLLDSEDKREIMETIRLNGGLKRNNEKEITNFSDDEMQGFQDEMLALTDNQIAIQKDSKRKIIEKAINEVPYRTNEEWETQLLSKGNINKSNEKIITPLPVLFPDDDESGNSIERINEMVSKICLQRKKVEMRLQALEKTKIDLEKSKASLINKLIGN</sequence>
<comment type="function">
    <text evidence="4 5">Involved in pre-mRNA splicing and spliceosome disassembly. Promotes release of excised lariat intron from the spliceosome by acting as a receptor for PRP43. This targeting of PRP43 leads to disassembly of the spliceosome with the separation of the U2, U5, U6 snRNPs and the NTC complex.</text>
</comment>
<comment type="subunit">
    <text evidence="4 5">Component of the NTR complex (NTC-related complex), composed of NTR1, NTR2 and PRP43. Interacts with CLF1, NTR1 and PRP43.</text>
</comment>
<comment type="interaction">
    <interactant intactId="EBI-26362">
        <id>P36118</id>
    </interactant>
    <interactant intactId="EBI-576">
        <id>Q06411</id>
        <label>SPP382</label>
    </interactant>
    <organismsDiffer>false</organismsDiffer>
    <experiments>11</experiments>
</comment>
<comment type="subcellular location">
    <subcellularLocation>
        <location evidence="2">Cytoplasm</location>
    </subcellularLocation>
    <subcellularLocation>
        <location evidence="2">Nucleus</location>
    </subcellularLocation>
</comment>
<comment type="miscellaneous">
    <text evidence="3">Present with 892 molecules/cell in log phase SD medium.</text>
</comment>
<name>NTR2_YEAST</name>
<feature type="chain" id="PRO_0000203201" description="Pre-mRNA-splicing factor NTR2">
    <location>
        <begin position="1"/>
        <end position="322"/>
    </location>
</feature>
<feature type="region of interest" description="Disordered" evidence="1">
    <location>
        <begin position="1"/>
        <end position="30"/>
    </location>
</feature>
<feature type="region of interest" description="Disordered" evidence="1">
    <location>
        <begin position="113"/>
        <end position="137"/>
    </location>
</feature>
<feature type="compositionally biased region" description="Low complexity" evidence="1">
    <location>
        <begin position="115"/>
        <end position="132"/>
    </location>
</feature>
<feature type="modified residue" description="Phosphoserine" evidence="6 7">
    <location>
        <position position="40"/>
    </location>
</feature>
<feature type="modified residue" description="Phosphoserine" evidence="6">
    <location>
        <position position="153"/>
    </location>
</feature>
<feature type="modified residue" description="Phosphoserine" evidence="7">
    <location>
        <position position="197"/>
    </location>
</feature>
<feature type="helix" evidence="8">
    <location>
        <begin position="214"/>
        <end position="233"/>
    </location>
</feature>
<feature type="helix" evidence="8">
    <location>
        <begin position="241"/>
        <end position="251"/>
    </location>
</feature>
<feature type="helix" evidence="8">
    <location>
        <begin position="267"/>
        <end position="303"/>
    </location>
</feature>
<gene>
    <name type="primary">NTR2</name>
    <name type="ordered locus">YKR022C</name>
</gene>
<protein>
    <recommendedName>
        <fullName>Pre-mRNA-splicing factor NTR2</fullName>
    </recommendedName>
    <alternativeName>
        <fullName>Nineteen complex-related protein 2</fullName>
        <shortName>NTC-related protein 2</shortName>
    </alternativeName>
</protein>
<reference key="1">
    <citation type="journal article" date="1994" name="Nature">
        <title>Complete DNA sequence of yeast chromosome XI.</title>
        <authorList>
            <person name="Dujon B."/>
            <person name="Alexandraki D."/>
            <person name="Andre B."/>
            <person name="Ansorge W."/>
            <person name="Baladron V."/>
            <person name="Ballesta J.P.G."/>
            <person name="Banrevi A."/>
            <person name="Bolle P.-A."/>
            <person name="Bolotin-Fukuhara M."/>
            <person name="Bossier P."/>
            <person name="Bou G."/>
            <person name="Boyer J."/>
            <person name="Buitrago M.J."/>
            <person name="Cheret G."/>
            <person name="Colleaux L."/>
            <person name="Daignan-Fornier B."/>
            <person name="del Rey F."/>
            <person name="Dion C."/>
            <person name="Domdey H."/>
            <person name="Duesterhoeft A."/>
            <person name="Duesterhus S."/>
            <person name="Entian K.-D."/>
            <person name="Erfle H."/>
            <person name="Esteban P.F."/>
            <person name="Feldmann H."/>
            <person name="Fernandes L."/>
            <person name="Fobo G.M."/>
            <person name="Fritz C."/>
            <person name="Fukuhara H."/>
            <person name="Gabel C."/>
            <person name="Gaillon L."/>
            <person name="Garcia-Cantalejo J.M."/>
            <person name="Garcia-Ramirez J.J."/>
            <person name="Gent M.E."/>
            <person name="Ghazvini M."/>
            <person name="Goffeau A."/>
            <person name="Gonzalez A."/>
            <person name="Grothues D."/>
            <person name="Guerreiro P."/>
            <person name="Hegemann J.H."/>
            <person name="Hewitt N."/>
            <person name="Hilger F."/>
            <person name="Hollenberg C.P."/>
            <person name="Horaitis O."/>
            <person name="Indge K.J."/>
            <person name="Jacquier A."/>
            <person name="James C.M."/>
            <person name="Jauniaux J.-C."/>
            <person name="Jimenez A."/>
            <person name="Keuchel H."/>
            <person name="Kirchrath L."/>
            <person name="Kleine K."/>
            <person name="Koetter P."/>
            <person name="Legrain P."/>
            <person name="Liebl S."/>
            <person name="Louis E.J."/>
            <person name="Maia e Silva A."/>
            <person name="Marck C."/>
            <person name="Monnier A.-L."/>
            <person name="Moestl D."/>
            <person name="Mueller S."/>
            <person name="Obermaier B."/>
            <person name="Oliver S.G."/>
            <person name="Pallier C."/>
            <person name="Pascolo S."/>
            <person name="Pfeiffer F."/>
            <person name="Philippsen P."/>
            <person name="Planta R.J."/>
            <person name="Pohl F.M."/>
            <person name="Pohl T.M."/>
            <person name="Poehlmann R."/>
            <person name="Portetelle D."/>
            <person name="Purnelle B."/>
            <person name="Puzos V."/>
            <person name="Ramezani Rad M."/>
            <person name="Rasmussen S.W."/>
            <person name="Remacha M.A."/>
            <person name="Revuelta J.L."/>
            <person name="Richard G.-F."/>
            <person name="Rieger M."/>
            <person name="Rodrigues-Pousada C."/>
            <person name="Rose M."/>
            <person name="Rupp T."/>
            <person name="Santos M.A."/>
            <person name="Schwager C."/>
            <person name="Sensen C."/>
            <person name="Skala J."/>
            <person name="Soares H."/>
            <person name="Sor F."/>
            <person name="Stegemann J."/>
            <person name="Tettelin H."/>
            <person name="Thierry A."/>
            <person name="Tzermia M."/>
            <person name="Urrestarazu L.A."/>
            <person name="van Dyck L."/>
            <person name="van Vliet-Reedijk J.C."/>
            <person name="Valens M."/>
            <person name="Vandenbol M."/>
            <person name="Vilela C."/>
            <person name="Vissers S."/>
            <person name="von Wettstein D."/>
            <person name="Voss H."/>
            <person name="Wiemann S."/>
            <person name="Xu G."/>
            <person name="Zimmermann J."/>
            <person name="Haasemann M."/>
            <person name="Becker I."/>
            <person name="Mewes H.-W."/>
        </authorList>
    </citation>
    <scope>NUCLEOTIDE SEQUENCE [LARGE SCALE GENOMIC DNA]</scope>
    <source>
        <strain>ATCC 204508 / S288c</strain>
    </source>
</reference>
<reference key="2">
    <citation type="journal article" date="2014" name="G3 (Bethesda)">
        <title>The reference genome sequence of Saccharomyces cerevisiae: Then and now.</title>
        <authorList>
            <person name="Engel S.R."/>
            <person name="Dietrich F.S."/>
            <person name="Fisk D.G."/>
            <person name="Binkley G."/>
            <person name="Balakrishnan R."/>
            <person name="Costanzo M.C."/>
            <person name="Dwight S.S."/>
            <person name="Hitz B.C."/>
            <person name="Karra K."/>
            <person name="Nash R.S."/>
            <person name="Weng S."/>
            <person name="Wong E.D."/>
            <person name="Lloyd P."/>
            <person name="Skrzypek M.S."/>
            <person name="Miyasato S.R."/>
            <person name="Simison M."/>
            <person name="Cherry J.M."/>
        </authorList>
    </citation>
    <scope>GENOME REANNOTATION</scope>
    <source>
        <strain>ATCC 204508 / S288c</strain>
    </source>
</reference>
<reference key="3">
    <citation type="journal article" date="2003" name="Mol. Cell">
        <title>Assigning function to yeast proteins by integration of technologies.</title>
        <authorList>
            <person name="Hazbun T.R."/>
            <person name="Malmstroem L."/>
            <person name="Anderson S."/>
            <person name="Graczyk B.J."/>
            <person name="Fox B."/>
            <person name="Riffle M."/>
            <person name="Sundin B.A."/>
            <person name="Aranda J.D."/>
            <person name="McDonald W.H."/>
            <person name="Chiu C.-H."/>
            <person name="Snydsman B.E."/>
            <person name="Bradley P."/>
            <person name="Muller E.G.D."/>
            <person name="Fields S."/>
            <person name="Baker D."/>
            <person name="Yates J.R. III"/>
            <person name="Davis T.N."/>
        </authorList>
    </citation>
    <scope>IDENTIFICATION BY MASS SPECTROMETRY</scope>
</reference>
<reference key="4">
    <citation type="journal article" date="2003" name="Nature">
        <title>Global analysis of protein localization in budding yeast.</title>
        <authorList>
            <person name="Huh W.-K."/>
            <person name="Falvo J.V."/>
            <person name="Gerke L.C."/>
            <person name="Carroll A.S."/>
            <person name="Howson R.W."/>
            <person name="Weissman J.S."/>
            <person name="O'Shea E.K."/>
        </authorList>
    </citation>
    <scope>SUBCELLULAR LOCATION [LARGE SCALE ANALYSIS]</scope>
</reference>
<reference key="5">
    <citation type="journal article" date="2003" name="Nature">
        <title>Global analysis of protein expression in yeast.</title>
        <authorList>
            <person name="Ghaemmaghami S."/>
            <person name="Huh W.-K."/>
            <person name="Bower K."/>
            <person name="Howson R.W."/>
            <person name="Belle A."/>
            <person name="Dephoure N."/>
            <person name="O'Shea E.K."/>
            <person name="Weissman J.S."/>
        </authorList>
    </citation>
    <scope>LEVEL OF PROTEIN EXPRESSION [LARGE SCALE ANALYSIS]</scope>
</reference>
<reference key="6">
    <citation type="journal article" date="2005" name="Genes Dev.">
        <title>Spliceosome disassembly catalyzed by Prp43 and its associated components Ntr1 and Ntr2.</title>
        <authorList>
            <person name="Tsai R.-T."/>
            <person name="Fu R.-H."/>
            <person name="Yeh F.-L."/>
            <person name="Tseng C.-K."/>
            <person name="Lin Y.-C."/>
            <person name="Huang Y.-H."/>
            <person name="Cheng S.-C."/>
        </authorList>
    </citation>
    <scope>FUNCTION</scope>
    <scope>IDENTIFICATION IN THE NTC-RELATED COMPLEX</scope>
    <scope>INTERACTION WITH CLF1; NTR1 AND PRP43</scope>
</reference>
<reference key="7">
    <citation type="journal article" date="2006" name="Mol. Cell. Biol.">
        <title>Yeast ntr1/spp382 mediates prp43 function in postspliceosomes.</title>
        <authorList>
            <person name="Boon K.-L."/>
            <person name="Auchynnikava T."/>
            <person name="Edwalds-Gilbert G."/>
            <person name="Barrass J.D."/>
            <person name="Droop A.P."/>
            <person name="Dez C."/>
            <person name="Beggs J.D."/>
        </authorList>
    </citation>
    <scope>FUNCTION</scope>
    <scope>INTERACTION WITH NTR1 AND PRP43</scope>
</reference>
<reference key="8">
    <citation type="journal article" date="2008" name="Mol. Cell. Proteomics">
        <title>A multidimensional chromatography technology for in-depth phosphoproteome analysis.</title>
        <authorList>
            <person name="Albuquerque C.P."/>
            <person name="Smolka M.B."/>
            <person name="Payne S.H."/>
            <person name="Bafna V."/>
            <person name="Eng J."/>
            <person name="Zhou H."/>
        </authorList>
    </citation>
    <scope>PHOSPHORYLATION [LARGE SCALE ANALYSIS] AT SER-40 AND SER-153</scope>
    <scope>IDENTIFICATION BY MASS SPECTROMETRY [LARGE SCALE ANALYSIS]</scope>
</reference>
<reference key="9">
    <citation type="journal article" date="2009" name="Science">
        <title>Global analysis of Cdk1 substrate phosphorylation sites provides insights into evolution.</title>
        <authorList>
            <person name="Holt L.J."/>
            <person name="Tuch B.B."/>
            <person name="Villen J."/>
            <person name="Johnson A.D."/>
            <person name="Gygi S.P."/>
            <person name="Morgan D.O."/>
        </authorList>
    </citation>
    <scope>PHOSPHORYLATION [LARGE SCALE ANALYSIS] AT SER-40 AND SER-197</scope>
    <scope>IDENTIFICATION BY MASS SPECTROMETRY [LARGE SCALE ANALYSIS]</scope>
</reference>